<name>FLID_HELPJ</name>
<organism>
    <name type="scientific">Helicobacter pylori (strain J99 / ATCC 700824)</name>
    <name type="common">Campylobacter pylori J99</name>
    <dbReference type="NCBI Taxonomy" id="85963"/>
    <lineage>
        <taxon>Bacteria</taxon>
        <taxon>Pseudomonadati</taxon>
        <taxon>Campylobacterota</taxon>
        <taxon>Epsilonproteobacteria</taxon>
        <taxon>Campylobacterales</taxon>
        <taxon>Helicobacteraceae</taxon>
        <taxon>Helicobacter</taxon>
    </lineage>
</organism>
<accession>Q9ZL91</accession>
<gene>
    <name type="primary">fliD</name>
    <name type="ordered locus">jhp_0689</name>
</gene>
<protein>
    <recommendedName>
        <fullName>Flagellar hook-associated protein 2</fullName>
        <shortName>HAP2</shortName>
    </recommendedName>
    <alternativeName>
        <fullName>Filament cap protein</fullName>
    </alternativeName>
    <alternativeName>
        <fullName>Flagellar cap protein</fullName>
    </alternativeName>
</protein>
<sequence>MAIGSLSSLGLGSKVLNYDVIDKLKDADEKALIAPLDKKMEQNVEKQKALVEIKTLLSSLKGPVKTLSDYSTYISRKSNVTGDALSASVGAGVPIQDIKVDVQNLAQGDINELGAKFSSRDDIFSQVDTTLKFYTQNKDYAVDIKAGMTLGDVAQSITDATNGEVMGIVMKTGGNDPYQLMVNTKNTGEDNRVYFGSHLQSTLTNKNALSLGLDGAGKSELSLNLKGADGSMHEVPIMLELPESASIKQKNAAIQKAMEQALENDPNFKDLIANGDISIDTLHGGESLIINDRRGGNIEVKGSKAKELGFSQTTTQESDLLKSARTIKEGKLEGVVSLNGQKLDLSALTKESNTSEENTDAIIQAINAKEGLNAFKNAEGKLVINSKTGMLTIKGEDALGKASLKDLGLSAGMVQSYEASQDTLFMSKNLQKASDSQFTYNGVSITRPTNEVNDVISGVNITLEQTTEPNKPAIISVSRDNQAIIDSLKEFVKAYNELIPKLDEDTRYDADTKIAGIFNGVGDIRAIRSSLNNVFSYSVHTDNGVESLMKYGLSLDDKGVMSLDEAKLSSALNSNPKATQDFFYGSDSKDMGGREIHQEGIFSKFNQVIANLIDGGNAKLKIYEDSLDRDAKSLTKDKENAQELLKTRYNIMAERFAAYDSQISKANQKFNSVQMMIDQAAAKKN</sequence>
<comment type="function">
    <text evidence="1">Required for the morphogenesis and for the elongation of the flagellar filament by facilitating polymerization of the flagellin monomers at the tip of growing filament. Forms a capping structure, which prevents flagellin subunits (transported through the central channel of the flagellum) from leaking out without polymerization at the distal end. Essential to colonize and establish infection in gastric mucosa as a result of its essential role in motility (By similarity).</text>
</comment>
<comment type="subunit">
    <text evidence="1">Homopentamer.</text>
</comment>
<comment type="subcellular location">
    <subcellularLocation>
        <location>Secreted</location>
    </subcellularLocation>
    <subcellularLocation>
        <location>Bacterial flagellum</location>
    </subcellularLocation>
</comment>
<comment type="similarity">
    <text evidence="3">Belongs to the FliD family.</text>
</comment>
<feature type="initiator methionine" description="Removed" evidence="1">
    <location>
        <position position="1"/>
    </location>
</feature>
<feature type="chain" id="PRO_0000177020" description="Flagellar hook-associated protein 2">
    <location>
        <begin position="2"/>
        <end position="685"/>
    </location>
</feature>
<feature type="coiled-coil region" evidence="2">
    <location>
        <begin position="618"/>
        <end position="647"/>
    </location>
</feature>
<reference key="1">
    <citation type="journal article" date="1999" name="Nature">
        <title>Genomic sequence comparison of two unrelated isolates of the human gastric pathogen Helicobacter pylori.</title>
        <authorList>
            <person name="Alm R.A."/>
            <person name="Ling L.-S.L."/>
            <person name="Moir D.T."/>
            <person name="King B.L."/>
            <person name="Brown E.D."/>
            <person name="Doig P.C."/>
            <person name="Smith D.R."/>
            <person name="Noonan B."/>
            <person name="Guild B.C."/>
            <person name="deJonge B.L."/>
            <person name="Carmel G."/>
            <person name="Tummino P.J."/>
            <person name="Caruso A."/>
            <person name="Uria-Nickelsen M."/>
            <person name="Mills D.M."/>
            <person name="Ives C."/>
            <person name="Gibson R."/>
            <person name="Merberg D."/>
            <person name="Mills S.D."/>
            <person name="Jiang Q."/>
            <person name="Taylor D.E."/>
            <person name="Vovis G.F."/>
            <person name="Trust T.J."/>
        </authorList>
    </citation>
    <scope>NUCLEOTIDE SEQUENCE [LARGE SCALE GENOMIC DNA]</scope>
    <source>
        <strain>J99 / ATCC 700824</strain>
    </source>
</reference>
<proteinExistence type="inferred from homology"/>
<dbReference type="EMBL" id="AE001439">
    <property type="protein sequence ID" value="AAD06264.1"/>
    <property type="molecule type" value="Genomic_DNA"/>
</dbReference>
<dbReference type="PIR" id="A71901">
    <property type="entry name" value="A71901"/>
</dbReference>
<dbReference type="RefSeq" id="WP_010882551.1">
    <property type="nucleotide sequence ID" value="NC_000921.1"/>
</dbReference>
<dbReference type="SMR" id="Q9ZL91"/>
<dbReference type="KEGG" id="hpj:jhp_0689"/>
<dbReference type="PATRIC" id="fig|85963.30.peg.290"/>
<dbReference type="eggNOG" id="COG1345">
    <property type="taxonomic scope" value="Bacteria"/>
</dbReference>
<dbReference type="Proteomes" id="UP000000804">
    <property type="component" value="Chromosome"/>
</dbReference>
<dbReference type="GO" id="GO:0009421">
    <property type="term" value="C:bacterial-type flagellum filament cap"/>
    <property type="evidence" value="ECO:0007669"/>
    <property type="project" value="InterPro"/>
</dbReference>
<dbReference type="GO" id="GO:0009424">
    <property type="term" value="C:bacterial-type flagellum hook"/>
    <property type="evidence" value="ECO:0007669"/>
    <property type="project" value="InterPro"/>
</dbReference>
<dbReference type="GO" id="GO:0005576">
    <property type="term" value="C:extracellular region"/>
    <property type="evidence" value="ECO:0007669"/>
    <property type="project" value="UniProtKB-SubCell"/>
</dbReference>
<dbReference type="GO" id="GO:0071973">
    <property type="term" value="P:bacterial-type flagellum-dependent cell motility"/>
    <property type="evidence" value="ECO:0007669"/>
    <property type="project" value="TreeGrafter"/>
</dbReference>
<dbReference type="GO" id="GO:0007155">
    <property type="term" value="P:cell adhesion"/>
    <property type="evidence" value="ECO:0007669"/>
    <property type="project" value="InterPro"/>
</dbReference>
<dbReference type="InterPro" id="IPR040026">
    <property type="entry name" value="FliD"/>
</dbReference>
<dbReference type="InterPro" id="IPR010809">
    <property type="entry name" value="FliD_C"/>
</dbReference>
<dbReference type="InterPro" id="IPR003481">
    <property type="entry name" value="FliD_N"/>
</dbReference>
<dbReference type="NCBIfam" id="NF006282">
    <property type="entry name" value="PRK08453.1"/>
    <property type="match status" value="1"/>
</dbReference>
<dbReference type="PANTHER" id="PTHR30288">
    <property type="entry name" value="FLAGELLAR CAP/ASSEMBLY PROTEIN FLID"/>
    <property type="match status" value="1"/>
</dbReference>
<dbReference type="PANTHER" id="PTHR30288:SF0">
    <property type="entry name" value="FLAGELLAR HOOK-ASSOCIATED PROTEIN 2"/>
    <property type="match status" value="1"/>
</dbReference>
<dbReference type="Pfam" id="PF07195">
    <property type="entry name" value="FliD_C"/>
    <property type="match status" value="1"/>
</dbReference>
<dbReference type="Pfam" id="PF02465">
    <property type="entry name" value="FliD_N"/>
    <property type="match status" value="1"/>
</dbReference>
<keyword id="KW-0975">Bacterial flagellum</keyword>
<keyword id="KW-0175">Coiled coil</keyword>
<keyword id="KW-0964">Secreted</keyword>
<evidence type="ECO:0000250" key="1"/>
<evidence type="ECO:0000255" key="2"/>
<evidence type="ECO:0000305" key="3"/>